<proteinExistence type="evidence at transcript level"/>
<accession>A6QQJ8</accession>
<feature type="chain" id="PRO_0000341511" description="Ribonuclease ZC3H12A">
    <location>
        <begin position="1"/>
        <end position="583"/>
    </location>
</feature>
<feature type="domain" description="RNase NYN" evidence="3">
    <location>
        <begin position="119"/>
        <end position="274"/>
    </location>
</feature>
<feature type="zinc finger region" description="C3H1-type" evidence="4">
    <location>
        <begin position="284"/>
        <end position="309"/>
    </location>
</feature>
<feature type="region of interest" description="Disordered" evidence="5">
    <location>
        <begin position="1"/>
        <end position="29"/>
    </location>
</feature>
<feature type="region of interest" description="Ubiquitin association domain" evidence="1">
    <location>
        <begin position="26"/>
        <end position="71"/>
    </location>
</feature>
<feature type="region of interest" description="Necessary for interaction with TANK" evidence="2">
    <location>
        <begin position="65"/>
        <end position="134"/>
    </location>
</feature>
<feature type="region of interest" description="Disordered" evidence="5">
    <location>
        <begin position="73"/>
        <end position="119"/>
    </location>
</feature>
<feature type="region of interest" description="RNase" evidence="2">
    <location>
        <begin position="96"/>
        <end position="281"/>
    </location>
</feature>
<feature type="region of interest" description="RNA binding" evidence="2">
    <location>
        <begin position="198"/>
        <end position="204"/>
    </location>
</feature>
<feature type="region of interest" description="Disordered" evidence="5">
    <location>
        <begin position="262"/>
        <end position="290"/>
    </location>
</feature>
<feature type="region of interest" description="Necessary for interaction with ZC3H12D" evidence="2">
    <location>
        <begin position="285"/>
        <end position="441"/>
    </location>
</feature>
<feature type="region of interest" description="Disordered" evidence="5">
    <location>
        <begin position="323"/>
        <end position="404"/>
    </location>
</feature>
<feature type="region of interest" description="Disordered" evidence="5">
    <location>
        <begin position="503"/>
        <end position="530"/>
    </location>
</feature>
<feature type="compositionally biased region" description="Basic and acidic residues" evidence="5">
    <location>
        <begin position="1"/>
        <end position="11"/>
    </location>
</feature>
<feature type="compositionally biased region" description="Low complexity" evidence="5">
    <location>
        <begin position="15"/>
        <end position="29"/>
    </location>
</feature>
<feature type="compositionally biased region" description="Basic and acidic residues" evidence="5">
    <location>
        <begin position="73"/>
        <end position="82"/>
    </location>
</feature>
<feature type="compositionally biased region" description="Low complexity" evidence="5">
    <location>
        <begin position="341"/>
        <end position="352"/>
    </location>
</feature>
<feature type="compositionally biased region" description="Basic and acidic residues" evidence="5">
    <location>
        <begin position="353"/>
        <end position="364"/>
    </location>
</feature>
<feature type="compositionally biased region" description="Low complexity" evidence="5">
    <location>
        <begin position="384"/>
        <end position="393"/>
    </location>
</feature>
<feature type="binding site" evidence="2">
    <location>
        <position position="210"/>
    </location>
    <ligand>
        <name>Mg(2+)</name>
        <dbReference type="ChEBI" id="CHEBI:18420"/>
    </ligand>
</feature>
<feature type="modified residue" description="Phosphoserine" evidence="2">
    <location>
        <position position="83"/>
    </location>
</feature>
<feature type="modified residue" description="Phosphoserine" evidence="1">
    <location>
        <position position="422"/>
    </location>
</feature>
<feature type="modified residue" description="Phosphoserine" evidence="1">
    <location>
        <position position="426"/>
    </location>
</feature>
<reference evidence="7" key="1">
    <citation type="submission" date="2007-07" db="EMBL/GenBank/DDBJ databases">
        <authorList>
            <consortium name="NIH - Mammalian Gene Collection (MGC) project"/>
        </authorList>
    </citation>
    <scope>NUCLEOTIDE SEQUENCE [LARGE SCALE MRNA]</scope>
    <source>
        <strain evidence="7">Hereford</strain>
        <tissue evidence="7">Hippocampus</tissue>
    </source>
</reference>
<sequence>MSLWELEDRRSCQGTPRPAQEPTAEEATTAELQMKVDFFRKLGYSSAEIHSVLQKLGIQADTNTVLGELVKHGSAAERERQASPDPCPQLPLVPRGGGTPKAPTVETYPPEEDKEGSDLRPIVIDGSNVAMSHGNKDVFSCRGILLAVNWFLERGHTDITVFVPSWRKEQPRPDVPITDQHILRDLEKKKILVFTPSRRVGGKRVVCYDDRFIVKLAFESDGIVVSNDTYRDLQGERQEWKRFIEERLLMYSFVNDKFMPPDDPLGRHGPSLDNFLRKKPLTSEHKKQPCPYGRKCTYGIKCRFLHPERPSRPQRSVADELRANALLPPSRAASKDKNSRRPSPSSQPGSLPTEHEQCSPDRKKLGAQASPGTPREGLMQTFAPTGRSLPPSGSSGGSFGPSEWFPQTLDSLPYASQDCLDSGIGSLESQMSELWGVRGGGPGEPGPPRGPYAGYCTYGAELPATPAFSAFSRALGAGHFSVPADYAPPPAAFPPREYWSEPYQLPPPTQRLQEPQAPGPGADRGPWGGAGRLAKERASVYTKLCGVFPPHLVEAVMSRFPQLLDPQQLAAEILSYKSQHLSE</sequence>
<gene>
    <name evidence="2" type="primary">ZC3H12A</name>
</gene>
<protein>
    <recommendedName>
        <fullName>Ribonuclease ZC3H12A</fullName>
        <ecNumber>3.1.-.-</ecNumber>
    </recommendedName>
    <alternativeName>
        <fullName>Zinc finger CCCH domain-containing protein 12A</fullName>
    </alternativeName>
</protein>
<evidence type="ECO:0000250" key="1">
    <source>
        <dbReference type="UniProtKB" id="Q5D1E7"/>
    </source>
</evidence>
<evidence type="ECO:0000250" key="2">
    <source>
        <dbReference type="UniProtKB" id="Q5D1E8"/>
    </source>
</evidence>
<evidence type="ECO:0000255" key="3"/>
<evidence type="ECO:0000255" key="4">
    <source>
        <dbReference type="PROSITE-ProRule" id="PRU00723"/>
    </source>
</evidence>
<evidence type="ECO:0000256" key="5">
    <source>
        <dbReference type="SAM" id="MobiDB-lite"/>
    </source>
</evidence>
<evidence type="ECO:0000305" key="6"/>
<evidence type="ECO:0000312" key="7">
    <source>
        <dbReference type="EMBL" id="AAI49868.1"/>
    </source>
</evidence>
<dbReference type="EC" id="3.1.-.-"/>
<dbReference type="EMBL" id="BC149867">
    <property type="protein sequence ID" value="AAI49868.1"/>
    <property type="molecule type" value="mRNA"/>
</dbReference>
<dbReference type="RefSeq" id="NP_001095657.1">
    <property type="nucleotide sequence ID" value="NM_001102187.1"/>
</dbReference>
<dbReference type="RefSeq" id="XP_005204850.1">
    <property type="nucleotide sequence ID" value="XM_005204793.3"/>
</dbReference>
<dbReference type="SMR" id="A6QQJ8"/>
<dbReference type="FunCoup" id="A6QQJ8">
    <property type="interactions" value="278"/>
</dbReference>
<dbReference type="STRING" id="9913.ENSBTAP00000015041"/>
<dbReference type="PaxDb" id="9913-ENSBTAP00000015041"/>
<dbReference type="Ensembl" id="ENSBTAT00000015041.7">
    <property type="protein sequence ID" value="ENSBTAP00000015041.5"/>
    <property type="gene ID" value="ENSBTAG00000011316.7"/>
</dbReference>
<dbReference type="GeneID" id="535344"/>
<dbReference type="KEGG" id="bta:535344"/>
<dbReference type="CTD" id="80149"/>
<dbReference type="VEuPathDB" id="HostDB:ENSBTAG00000011316"/>
<dbReference type="VGNC" id="VGNC:37097">
    <property type="gene designation" value="ZC3H12A"/>
</dbReference>
<dbReference type="eggNOG" id="KOG3777">
    <property type="taxonomic scope" value="Eukaryota"/>
</dbReference>
<dbReference type="GeneTree" id="ENSGT00940000155107"/>
<dbReference type="HOGENOM" id="CLU_013020_2_1_1"/>
<dbReference type="InParanoid" id="A6QQJ8"/>
<dbReference type="OMA" id="DMWPYRS"/>
<dbReference type="OrthoDB" id="392925at2759"/>
<dbReference type="TreeFam" id="TF315783"/>
<dbReference type="Proteomes" id="UP000009136">
    <property type="component" value="Chromosome 3"/>
</dbReference>
<dbReference type="Bgee" id="ENSBTAG00000011316">
    <property type="expression patterns" value="Expressed in digestive system secreted substance and 102 other cell types or tissues"/>
</dbReference>
<dbReference type="GO" id="GO:0005737">
    <property type="term" value="C:cytoplasm"/>
    <property type="evidence" value="ECO:0000250"/>
    <property type="project" value="UniProtKB"/>
</dbReference>
<dbReference type="GO" id="GO:0036464">
    <property type="term" value="C:cytoplasmic ribonucleoprotein granule"/>
    <property type="evidence" value="ECO:0000318"/>
    <property type="project" value="GO_Central"/>
</dbReference>
<dbReference type="GO" id="GO:0005856">
    <property type="term" value="C:cytoskeleton"/>
    <property type="evidence" value="ECO:0000250"/>
    <property type="project" value="UniProtKB"/>
</dbReference>
<dbReference type="GO" id="GO:0005654">
    <property type="term" value="C:nucleoplasm"/>
    <property type="evidence" value="ECO:0007669"/>
    <property type="project" value="Ensembl"/>
</dbReference>
<dbReference type="GO" id="GO:0005634">
    <property type="term" value="C:nucleus"/>
    <property type="evidence" value="ECO:0000250"/>
    <property type="project" value="UniProtKB"/>
</dbReference>
<dbReference type="GO" id="GO:0000932">
    <property type="term" value="C:P-body"/>
    <property type="evidence" value="ECO:0000250"/>
    <property type="project" value="UniProtKB"/>
</dbReference>
<dbReference type="GO" id="GO:0032991">
    <property type="term" value="C:protein-containing complex"/>
    <property type="evidence" value="ECO:0007669"/>
    <property type="project" value="Ensembl"/>
</dbReference>
<dbReference type="GO" id="GO:0030867">
    <property type="term" value="C:rough endoplasmic reticulum membrane"/>
    <property type="evidence" value="ECO:0000250"/>
    <property type="project" value="UniProtKB"/>
</dbReference>
<dbReference type="GO" id="GO:0003682">
    <property type="term" value="F:chromatin binding"/>
    <property type="evidence" value="ECO:0000250"/>
    <property type="project" value="UniProtKB"/>
</dbReference>
<dbReference type="GO" id="GO:0004843">
    <property type="term" value="F:cysteine-type deubiquitinase activity"/>
    <property type="evidence" value="ECO:0007669"/>
    <property type="project" value="Ensembl"/>
</dbReference>
<dbReference type="GO" id="GO:0003677">
    <property type="term" value="F:DNA binding"/>
    <property type="evidence" value="ECO:0000250"/>
    <property type="project" value="UniProtKB"/>
</dbReference>
<dbReference type="GO" id="GO:0035198">
    <property type="term" value="F:miRNA binding"/>
    <property type="evidence" value="ECO:0000250"/>
    <property type="project" value="UniProtKB"/>
</dbReference>
<dbReference type="GO" id="GO:0035925">
    <property type="term" value="F:mRNA 3'-UTR AU-rich region binding"/>
    <property type="evidence" value="ECO:0000250"/>
    <property type="project" value="UniProtKB"/>
</dbReference>
<dbReference type="GO" id="GO:0003730">
    <property type="term" value="F:mRNA 3'-UTR binding"/>
    <property type="evidence" value="ECO:0000250"/>
    <property type="project" value="UniProtKB"/>
</dbReference>
<dbReference type="GO" id="GO:0003729">
    <property type="term" value="F:mRNA binding"/>
    <property type="evidence" value="ECO:0000250"/>
    <property type="project" value="UniProtKB"/>
</dbReference>
<dbReference type="GO" id="GO:0004518">
    <property type="term" value="F:nuclease activity"/>
    <property type="evidence" value="ECO:0000250"/>
    <property type="project" value="UniProtKB"/>
</dbReference>
<dbReference type="GO" id="GO:0043022">
    <property type="term" value="F:ribosome binding"/>
    <property type="evidence" value="ECO:0007669"/>
    <property type="project" value="Ensembl"/>
</dbReference>
<dbReference type="GO" id="GO:0004521">
    <property type="term" value="F:RNA endonuclease activity"/>
    <property type="evidence" value="ECO:0000250"/>
    <property type="project" value="UniProtKB"/>
</dbReference>
<dbReference type="GO" id="GO:0004532">
    <property type="term" value="F:RNA exonuclease activity"/>
    <property type="evidence" value="ECO:0000250"/>
    <property type="project" value="UniProtKB"/>
</dbReference>
<dbReference type="GO" id="GO:0035613">
    <property type="term" value="F:RNA stem-loop binding"/>
    <property type="evidence" value="ECO:0000250"/>
    <property type="project" value="UniProtKB"/>
</dbReference>
<dbReference type="GO" id="GO:0008270">
    <property type="term" value="F:zinc ion binding"/>
    <property type="evidence" value="ECO:0007669"/>
    <property type="project" value="UniProtKB-KW"/>
</dbReference>
<dbReference type="GO" id="GO:0061158">
    <property type="term" value="P:3'-UTR-mediated mRNA destabilization"/>
    <property type="evidence" value="ECO:0000250"/>
    <property type="project" value="UniProtKB"/>
</dbReference>
<dbReference type="GO" id="GO:0001525">
    <property type="term" value="P:angiogenesis"/>
    <property type="evidence" value="ECO:0007669"/>
    <property type="project" value="UniProtKB-KW"/>
</dbReference>
<dbReference type="GO" id="GO:0006915">
    <property type="term" value="P:apoptotic process"/>
    <property type="evidence" value="ECO:0007669"/>
    <property type="project" value="UniProtKB-KW"/>
</dbReference>
<dbReference type="GO" id="GO:0030154">
    <property type="term" value="P:cell differentiation"/>
    <property type="evidence" value="ECO:0007669"/>
    <property type="project" value="UniProtKB-KW"/>
</dbReference>
<dbReference type="GO" id="GO:1990869">
    <property type="term" value="P:cellular response to chemokine"/>
    <property type="evidence" value="ECO:0000250"/>
    <property type="project" value="UniProtKB"/>
</dbReference>
<dbReference type="GO" id="GO:0042149">
    <property type="term" value="P:cellular response to glucose starvation"/>
    <property type="evidence" value="ECO:0007669"/>
    <property type="project" value="Ensembl"/>
</dbReference>
<dbReference type="GO" id="GO:1904637">
    <property type="term" value="P:cellular response to ionomycin"/>
    <property type="evidence" value="ECO:0000250"/>
    <property type="project" value="UniProtKB"/>
</dbReference>
<dbReference type="GO" id="GO:0071222">
    <property type="term" value="P:cellular response to lipopolysaccharide"/>
    <property type="evidence" value="ECO:0000250"/>
    <property type="project" value="UniProtKB"/>
</dbReference>
<dbReference type="GO" id="GO:0034599">
    <property type="term" value="P:cellular response to oxidative stress"/>
    <property type="evidence" value="ECO:0007669"/>
    <property type="project" value="Ensembl"/>
</dbReference>
<dbReference type="GO" id="GO:1903936">
    <property type="term" value="P:cellular response to sodium arsenite"/>
    <property type="evidence" value="ECO:0007669"/>
    <property type="project" value="Ensembl"/>
</dbReference>
<dbReference type="GO" id="GO:0071356">
    <property type="term" value="P:cellular response to tumor necrosis factor"/>
    <property type="evidence" value="ECO:0000250"/>
    <property type="project" value="UniProtKB"/>
</dbReference>
<dbReference type="GO" id="GO:0098586">
    <property type="term" value="P:cellular response to virus"/>
    <property type="evidence" value="ECO:0007669"/>
    <property type="project" value="Ensembl"/>
</dbReference>
<dbReference type="GO" id="GO:0006974">
    <property type="term" value="P:DNA damage response"/>
    <property type="evidence" value="ECO:0007669"/>
    <property type="project" value="Ensembl"/>
</dbReference>
<dbReference type="GO" id="GO:0002757">
    <property type="term" value="P:immune response-activating signaling pathway"/>
    <property type="evidence" value="ECO:0000250"/>
    <property type="project" value="UniProtKB"/>
</dbReference>
<dbReference type="GO" id="GO:0010587">
    <property type="term" value="P:miRNA catabolic process"/>
    <property type="evidence" value="ECO:0000250"/>
    <property type="project" value="UniProtKB"/>
</dbReference>
<dbReference type="GO" id="GO:0006402">
    <property type="term" value="P:mRNA catabolic process"/>
    <property type="evidence" value="ECO:0007669"/>
    <property type="project" value="Ensembl"/>
</dbReference>
<dbReference type="GO" id="GO:0044828">
    <property type="term" value="P:negative regulation by host of viral genome replication"/>
    <property type="evidence" value="ECO:0007669"/>
    <property type="project" value="Ensembl"/>
</dbReference>
<dbReference type="GO" id="GO:0043124">
    <property type="term" value="P:negative regulation of canonical NF-kappaB signal transduction"/>
    <property type="evidence" value="ECO:0000250"/>
    <property type="project" value="UniProtKB"/>
</dbReference>
<dbReference type="GO" id="GO:0055118">
    <property type="term" value="P:negative regulation of cardiac muscle contraction"/>
    <property type="evidence" value="ECO:0000250"/>
    <property type="project" value="UniProtKB"/>
</dbReference>
<dbReference type="GO" id="GO:1900016">
    <property type="term" value="P:negative regulation of cytokine production involved in inflammatory response"/>
    <property type="evidence" value="ECO:0000250"/>
    <property type="project" value="UniProtKB"/>
</dbReference>
<dbReference type="GO" id="GO:0032691">
    <property type="term" value="P:negative regulation of interleukin-1 beta production"/>
    <property type="evidence" value="ECO:0000250"/>
    <property type="project" value="UniProtKB"/>
</dbReference>
<dbReference type="GO" id="GO:0032715">
    <property type="term" value="P:negative regulation of interleukin-6 production"/>
    <property type="evidence" value="ECO:0000250"/>
    <property type="project" value="UniProtKB"/>
</dbReference>
<dbReference type="GO" id="GO:0010656">
    <property type="term" value="P:negative regulation of muscle cell apoptotic process"/>
    <property type="evidence" value="ECO:0000250"/>
    <property type="project" value="UniProtKB"/>
</dbReference>
<dbReference type="GO" id="GO:0045019">
    <property type="term" value="P:negative regulation of nitric oxide biosynthetic process"/>
    <property type="evidence" value="ECO:0000250"/>
    <property type="project" value="UniProtKB"/>
</dbReference>
<dbReference type="GO" id="GO:1901223">
    <property type="term" value="P:negative regulation of non-canonical NF-kappaB signal transduction"/>
    <property type="evidence" value="ECO:0000250"/>
    <property type="project" value="UniProtKB"/>
</dbReference>
<dbReference type="GO" id="GO:2000320">
    <property type="term" value="P:negative regulation of T-helper 17 cell differentiation"/>
    <property type="evidence" value="ECO:0000250"/>
    <property type="project" value="UniProtKB"/>
</dbReference>
<dbReference type="GO" id="GO:0032720">
    <property type="term" value="P:negative regulation of tumor necrosis factor production"/>
    <property type="evidence" value="ECO:0000250"/>
    <property type="project" value="UniProtKB"/>
</dbReference>
<dbReference type="GO" id="GO:0032689">
    <property type="term" value="P:negative regulation of type II interferon production"/>
    <property type="evidence" value="ECO:0000250"/>
    <property type="project" value="UniProtKB"/>
</dbReference>
<dbReference type="GO" id="GO:0045766">
    <property type="term" value="P:positive regulation of angiogenesis"/>
    <property type="evidence" value="ECO:0000250"/>
    <property type="project" value="UniProtKB"/>
</dbReference>
<dbReference type="GO" id="GO:0010508">
    <property type="term" value="P:positive regulation of autophagy"/>
    <property type="evidence" value="ECO:0007669"/>
    <property type="project" value="Ensembl"/>
</dbReference>
<dbReference type="GO" id="GO:0002230">
    <property type="term" value="P:positive regulation of defense response to virus by host"/>
    <property type="evidence" value="ECO:0007669"/>
    <property type="project" value="Ensembl"/>
</dbReference>
<dbReference type="GO" id="GO:0010595">
    <property type="term" value="P:positive regulation of endothelial cell migration"/>
    <property type="evidence" value="ECO:0000250"/>
    <property type="project" value="UniProtKB"/>
</dbReference>
<dbReference type="GO" id="GO:1900119">
    <property type="term" value="P:positive regulation of execution phase of apoptosis"/>
    <property type="evidence" value="ECO:0007669"/>
    <property type="project" value="Ensembl"/>
</dbReference>
<dbReference type="GO" id="GO:0045600">
    <property type="term" value="P:positive regulation of fat cell differentiation"/>
    <property type="evidence" value="ECO:0000250"/>
    <property type="project" value="UniProtKB"/>
</dbReference>
<dbReference type="GO" id="GO:0010628">
    <property type="term" value="P:positive regulation of gene expression"/>
    <property type="evidence" value="ECO:0007669"/>
    <property type="project" value="Ensembl"/>
</dbReference>
<dbReference type="GO" id="GO:0010884">
    <property type="term" value="P:positive regulation of lipid storage"/>
    <property type="evidence" value="ECO:0007669"/>
    <property type="project" value="Ensembl"/>
</dbReference>
<dbReference type="GO" id="GO:2000627">
    <property type="term" value="P:positive regulation of miRNA catabolic process"/>
    <property type="evidence" value="ECO:0007669"/>
    <property type="project" value="Ensembl"/>
</dbReference>
<dbReference type="GO" id="GO:0061014">
    <property type="term" value="P:positive regulation of mRNA catabolic process"/>
    <property type="evidence" value="ECO:0000250"/>
    <property type="project" value="UniProtKB"/>
</dbReference>
<dbReference type="GO" id="GO:1900745">
    <property type="term" value="P:positive regulation of p38MAPK cascade"/>
    <property type="evidence" value="ECO:0007669"/>
    <property type="project" value="Ensembl"/>
</dbReference>
<dbReference type="GO" id="GO:1903003">
    <property type="term" value="P:positive regulation of protein deubiquitination"/>
    <property type="evidence" value="ECO:0007669"/>
    <property type="project" value="Ensembl"/>
</dbReference>
<dbReference type="GO" id="GO:0042307">
    <property type="term" value="P:positive regulation of protein import into nucleus"/>
    <property type="evidence" value="ECO:0007669"/>
    <property type="project" value="Ensembl"/>
</dbReference>
<dbReference type="GO" id="GO:2000379">
    <property type="term" value="P:positive regulation of reactive oxygen species metabolic process"/>
    <property type="evidence" value="ECO:0007669"/>
    <property type="project" value="Ensembl"/>
</dbReference>
<dbReference type="GO" id="GO:0045944">
    <property type="term" value="P:positive regulation of transcription by RNA polymerase II"/>
    <property type="evidence" value="ECO:0000250"/>
    <property type="project" value="UniProtKB"/>
</dbReference>
<dbReference type="GO" id="GO:0051259">
    <property type="term" value="P:protein complex oligomerization"/>
    <property type="evidence" value="ECO:0000250"/>
    <property type="project" value="UniProtKB"/>
</dbReference>
<dbReference type="GO" id="GO:0016579">
    <property type="term" value="P:protein deubiquitination"/>
    <property type="evidence" value="ECO:0007669"/>
    <property type="project" value="Ensembl"/>
</dbReference>
<dbReference type="GO" id="GO:0050852">
    <property type="term" value="P:T cell receptor signaling pathway"/>
    <property type="evidence" value="ECO:0000250"/>
    <property type="project" value="UniProtKB"/>
</dbReference>
<dbReference type="CDD" id="cd18729">
    <property type="entry name" value="PIN_Zc3h12-like"/>
    <property type="match status" value="1"/>
</dbReference>
<dbReference type="FunFam" id="3.40.50.11980:FF:000001">
    <property type="entry name" value="ZC3H12A isoform 1"/>
    <property type="match status" value="1"/>
</dbReference>
<dbReference type="Gene3D" id="3.40.50.11980">
    <property type="match status" value="1"/>
</dbReference>
<dbReference type="InterPro" id="IPR040546">
    <property type="entry name" value="Rege-1_UBA-like"/>
</dbReference>
<dbReference type="InterPro" id="IPR040757">
    <property type="entry name" value="Regnase_1/ZC3H12_C"/>
</dbReference>
<dbReference type="InterPro" id="IPR021869">
    <property type="entry name" value="RNase_Zc3h12_NYN"/>
</dbReference>
<dbReference type="InterPro" id="IPR051101">
    <property type="entry name" value="ZC3H12/N4BP1_RNase_Reg"/>
</dbReference>
<dbReference type="InterPro" id="IPR000571">
    <property type="entry name" value="Znf_CCCH"/>
</dbReference>
<dbReference type="PANTHER" id="PTHR12876:SF10">
    <property type="entry name" value="ENDORIBONUCLEASE ZC3H12A"/>
    <property type="match status" value="1"/>
</dbReference>
<dbReference type="PANTHER" id="PTHR12876">
    <property type="entry name" value="N4BP1-RELATED"/>
    <property type="match status" value="1"/>
</dbReference>
<dbReference type="Pfam" id="PF18561">
    <property type="entry name" value="Regnase_1_C"/>
    <property type="match status" value="1"/>
</dbReference>
<dbReference type="Pfam" id="PF11977">
    <property type="entry name" value="RNase_Zc3h12a"/>
    <property type="match status" value="1"/>
</dbReference>
<dbReference type="Pfam" id="PF18039">
    <property type="entry name" value="UBA_6"/>
    <property type="match status" value="1"/>
</dbReference>
<dbReference type="PROSITE" id="PS50103">
    <property type="entry name" value="ZF_C3H1"/>
    <property type="match status" value="1"/>
</dbReference>
<comment type="function">
    <text evidence="1 2">Endoribonuclease involved in various biological functions such as cellular inflammatory response and immune homeostasis, glial differentiation of neuroprogenitor cells, cell death of cardiomyocytes, adipogenesis and angiogenesis. Functions as an endoribonuclease involved in mRNA decay. Modulates the inflammatory response by promoting the degradation of a set of translationally active cytokine-induced inflammation-related mRNAs, such as IL6 and IL12B, during the early phase of inflammation. Prevents aberrant T-cell-mediated immune reaction by degradation of multiple mRNAs controlling T-cell activation, such as those encoding cytokines (IL6 and IL2), cell surface receptors (ICOS, TNFRSF4 and TNFR2) and transcription factor (REL). Inhibits cooperatively with ZC3H12A the differentiation of helper T cells Th17 in lungs. They repress target mRNA encoding the Th17 cell-promoting factors IL6, ICOS, REL, IRF4, NFKBID and NFKBIZ. The cooperation requires RNA-binding by RC3H1 and the nuclease activity of ZC3H12A (By similarity). Together with RC3H1, destabilizes TNFRSF4/OX40 mRNA by binding to the conserved stem loop structure in its 3'UTR (By similarity). Self regulates by destabilizing its own mRNA. Cleaves mRNA harboring a stem-loop (SL), often located in their 3'-UTRs, during the early phase of inflammation in a helicase UPF1-dependent manner (By similarity). Plays a role in the inhibition of microRNAs (miRNAs) biogenesis (By similarity). Cleaves the terminal loop of a set of precursor miRNAs (pre-miRNAs) important for the regulation of the inflammatory response leading to their degradation, and thus preventing the biosynthesis of mature miRNAs (By similarity). Also plays a role in promoting angiogenesis in response to inflammatory cytokines by inhibiting the production of antiangiogenic microRNAs via its anti-dicer RNase activity (By similarity). Affects the overall ubiquitination of cellular proteins. Positively regulates deubiquitinase activity promoting the cleavage at 'Lys-48'- and 'Lys-63'-linked polyubiquitin chains on TNF receptor-associated factors (TRAFs), preventing JNK and NF-kappa-B signaling pathway activation, and hence negatively regulating macrophage-mediated inflammatory response and immune homeostasis (By similarity). Also induces deubiquitination of the transcription factor HIF1A, probably leading to its stabilization and nuclear import, thereby positively regulating the expression of proangiogenic HIF1A-targeted genes. Involved in a TANK-dependent negative feedback response to attenuate NF-kappaB activation through the deubiquitination of IKBKG or TRAF6 in response to interleukin-1-beta (IL1B) stimulation or upon DNA damage (By similarity). Prevents stress granules (SGs) formation and promotes macrophage apoptosis under stress conditions, including arsenite-induced oxidative stress, heat shock, and energy deprivation. Plays a role in the regulation of macrophage polarization; promotes IL4-induced polarization of macrophages M1 into anti-inflammatory M2 state. May also act as a transcription factor that regulates the expression of multiple genes involved in inflammatory response, angiogenesis, adipogenesis and apoptosis (By similarity). Functions as a positive regulator of glial differentiation of neuroprogenitor cells through an amyloid precursor protein (APP)-dependent signaling pathway (By similarity). Attenuates septic myocardial contractile dysfunction in response to lipopolysaccharide (LPS) by reducing I-kappa-B-kinase (IKK)-mediated NF-kappa-B activation, and hence myocardial pro-inflammatory cytokine production (By similarity).</text>
</comment>
<comment type="cofactor">
    <cofactor evidence="2">
        <name>Mg(2+)</name>
        <dbReference type="ChEBI" id="CHEBI:18420"/>
    </cofactor>
    <text evidence="2">Mg(2+) is required for RNase activity.</text>
</comment>
<comment type="subunit">
    <text evidence="1 2">Oligomer. Found in a deubiquitination complex with TANK, USP10 and ZC3H12A; this complex inhibits genotoxic stress- or interleukin-1-beta-mediated NF-kappaB activation by promoting IKBKG or TRAF6 deubiquitination. Interacts with IKBKG; this interaction increases in response to DNA damage. Interacts with TANK; this interaction increases in response to DNA damage and serves as a bridge to anchor both TANK and USP10 into a deubiquitinating complex. Interacts with TRAF6; this interaction increases in response to DNA damage and is stimulated by TANK. Interacts with USP10; this interaction increases in response to DNA damage and serves as a bridge to anchor both TANK and USP10 into a deubiquitinating complex. Interacts with ZC3H12D. Interacts with TNRC6A. Interacts with IKBKB/IKKB (By similarity). Interacts with IKBKB/IKKB. Interacts with BTRC; the interaction occurs when ZC3H12A is phosphorylated in a IKBKB/IKKB-dependent manner (By similarity). Interacts with IRAK1; this interaction increases the interaction between ZC3H12A and IKBKB/IKKB (By similarity). Interacts with UPF1; this interaction occurs in a mRNA translationally active- and termination-dependent manner and is essential for ZC3H12A-mediated degradation of target mRNAs (By similarity). Associates with ribosomes (By similarity). Interacts with ubiquitin (By similarity).</text>
</comment>
<comment type="subcellular location">
    <subcellularLocation>
        <location evidence="2">Nucleus</location>
    </subcellularLocation>
    <subcellularLocation>
        <location evidence="2">Cytoplasm</location>
    </subcellularLocation>
    <subcellularLocation>
        <location evidence="2">Cytoplasm</location>
        <location evidence="2">P-body</location>
    </subcellularLocation>
    <subcellularLocation>
        <location evidence="1">Rough endoplasmic reticulum membrane</location>
        <topology evidence="1">Peripheral membrane protein</topology>
        <orientation evidence="1">Cytoplasmic side</orientation>
    </subcellularLocation>
    <subcellularLocation>
        <location evidence="1">Cytoplasmic granule</location>
    </subcellularLocation>
    <text evidence="2">Predominantly localized in the cytoplasm. Colocalizes with GW182 on many granule-like structures, probably corresponding to cytoplasmic GW bodies (GWBs), also called processing bodies (P bodies). Colocalizes with calnexin on the surface of the rough endoplasmic reticulum (RER) membrane and with translationally active polysomes (By similarity). Colocalizes with ZC3H12D in cytoplasmic mRNA processing P-body, also known as GW bodies (GWBs) (By similarity).</text>
</comment>
<comment type="domain">
    <text evidence="2">The C3H1-type zinc finger domain and C-terminal region are necessary for pre-miRNA binding. The C-terminal region and proline-rich domain are necessary for oligomerization.</text>
</comment>
<comment type="PTM">
    <text evidence="1 2">Phosphorylated by IRAK1; phosphorylation is necessary for subsequent phosphorylation by the I-kappa-B-kinase (IKK) complex. Phosphorylated by I-kappa-B-kinase (IKK) subunits IKBKB/IKKB and CHUK/IKKA at Ser-422 and Ser-426; these phosphorylations promote ubiquitin proteasome-mediated degradation of ZC3H12A and hence facilitates rapid and robust production of IL-6 mRNA in response to toll-like receptor (TLR) or IL-1 receptor stimuli (By similarity).</text>
</comment>
<comment type="PTM">
    <text evidence="1 2">Ubiquitinated; ubiquitination is induced in response to interleukin IL1 receptor stimuli in a IKBKB/IKKB and IRAK1-dependent manner, leading to proteasome-mediated degradation (By similarity).</text>
</comment>
<comment type="PTM">
    <text evidence="1">Proteolytically cleaved between Arg-95 and Arg-198 by MALT1 in activated T-cells; cleavage at Arg-95 is critical for promoting ZC3H12A degradation in response to T-cell receptor (TCR) stimulation, and hence is necessary for prolonging the stability of a set of mRNAs controlling T-cell activation and Th17 cell differentiation.</text>
</comment>
<comment type="similarity">
    <text evidence="6">Belongs to the ZC3H12 family.</text>
</comment>
<organism>
    <name type="scientific">Bos taurus</name>
    <name type="common">Bovine</name>
    <dbReference type="NCBI Taxonomy" id="9913"/>
    <lineage>
        <taxon>Eukaryota</taxon>
        <taxon>Metazoa</taxon>
        <taxon>Chordata</taxon>
        <taxon>Craniata</taxon>
        <taxon>Vertebrata</taxon>
        <taxon>Euteleostomi</taxon>
        <taxon>Mammalia</taxon>
        <taxon>Eutheria</taxon>
        <taxon>Laurasiatheria</taxon>
        <taxon>Artiodactyla</taxon>
        <taxon>Ruminantia</taxon>
        <taxon>Pecora</taxon>
        <taxon>Bovidae</taxon>
        <taxon>Bovinae</taxon>
        <taxon>Bos</taxon>
    </lineage>
</organism>
<keyword id="KW-0037">Angiogenesis</keyword>
<keyword id="KW-0053">Apoptosis</keyword>
<keyword id="KW-0963">Cytoplasm</keyword>
<keyword id="KW-0217">Developmental protein</keyword>
<keyword id="KW-0221">Differentiation</keyword>
<keyword id="KW-0255">Endonuclease</keyword>
<keyword id="KW-0256">Endoplasmic reticulum</keyword>
<keyword id="KW-0378">Hydrolase</keyword>
<keyword id="KW-0460">Magnesium</keyword>
<keyword id="KW-0472">Membrane</keyword>
<keyword id="KW-0479">Metal-binding</keyword>
<keyword id="KW-0540">Nuclease</keyword>
<keyword id="KW-0539">Nucleus</keyword>
<keyword id="KW-0597">Phosphoprotein</keyword>
<keyword id="KW-1185">Reference proteome</keyword>
<keyword id="KW-0832">Ubl conjugation</keyword>
<keyword id="KW-0862">Zinc</keyword>
<keyword id="KW-0863">Zinc-finger</keyword>
<name>ZC12A_BOVIN</name>